<protein>
    <recommendedName>
        <fullName evidence="1">Threonylcarbamoyl-AMP synthase</fullName>
        <shortName evidence="1">TC-AMP synthase</shortName>
        <ecNumber evidence="1">2.7.7.87</ecNumber>
    </recommendedName>
    <alternativeName>
        <fullName evidence="1">L-threonylcarbamoyladenylate synthase</fullName>
    </alternativeName>
    <alternativeName>
        <fullName evidence="1">t(6)A37 threonylcarbamoyladenosine biosynthesis protein TsaC</fullName>
    </alternativeName>
    <alternativeName>
        <fullName evidence="1">tRNA threonylcarbamoyladenosine biosynthesis protein TsaC</fullName>
    </alternativeName>
</protein>
<feature type="chain" id="PRO_0000353022" description="Threonylcarbamoyl-AMP synthase">
    <location>
        <begin position="1"/>
        <end position="190"/>
    </location>
</feature>
<feature type="domain" description="YrdC-like" evidence="1">
    <location>
        <begin position="7"/>
        <end position="190"/>
    </location>
</feature>
<proteinExistence type="inferred from homology"/>
<dbReference type="EC" id="2.7.7.87" evidence="1"/>
<dbReference type="EMBL" id="AL590842">
    <property type="protein sequence ID" value="CAL18929.1"/>
    <property type="molecule type" value="Genomic_DNA"/>
</dbReference>
<dbReference type="EMBL" id="AE009952">
    <property type="protein sequence ID" value="AAM87571.1"/>
    <property type="status" value="ALT_INIT"/>
    <property type="molecule type" value="Genomic_DNA"/>
</dbReference>
<dbReference type="EMBL" id="AE017042">
    <property type="protein sequence ID" value="AAS60520.1"/>
    <property type="molecule type" value="Genomic_DNA"/>
</dbReference>
<dbReference type="PIR" id="AG0030">
    <property type="entry name" value="AG0030"/>
</dbReference>
<dbReference type="RefSeq" id="WP_002209025.1">
    <property type="nucleotide sequence ID" value="NZ_WUCM01000078.1"/>
</dbReference>
<dbReference type="RefSeq" id="YP_002345327.1">
    <property type="nucleotide sequence ID" value="NC_003143.1"/>
</dbReference>
<dbReference type="SMR" id="Q74XX5"/>
<dbReference type="STRING" id="214092.YPO0245a"/>
<dbReference type="PaxDb" id="214092-YPO0245a"/>
<dbReference type="DNASU" id="1148974"/>
<dbReference type="EnsemblBacteria" id="AAS60520">
    <property type="protein sequence ID" value="AAS60520"/>
    <property type="gene ID" value="YP_0244"/>
</dbReference>
<dbReference type="GeneID" id="57974358"/>
<dbReference type="KEGG" id="ype:YPO0245a"/>
<dbReference type="KEGG" id="ypk:y4027"/>
<dbReference type="KEGG" id="ypm:YP_0244"/>
<dbReference type="PATRIC" id="fig|214092.21.peg.474"/>
<dbReference type="eggNOG" id="COG0009">
    <property type="taxonomic scope" value="Bacteria"/>
</dbReference>
<dbReference type="HOGENOM" id="CLU_031397_6_0_6"/>
<dbReference type="OMA" id="LVDAFWP"/>
<dbReference type="OrthoDB" id="9814580at2"/>
<dbReference type="Proteomes" id="UP000000815">
    <property type="component" value="Chromosome"/>
</dbReference>
<dbReference type="Proteomes" id="UP000001019">
    <property type="component" value="Chromosome"/>
</dbReference>
<dbReference type="Proteomes" id="UP000002490">
    <property type="component" value="Chromosome"/>
</dbReference>
<dbReference type="GO" id="GO:0005737">
    <property type="term" value="C:cytoplasm"/>
    <property type="evidence" value="ECO:0000318"/>
    <property type="project" value="GO_Central"/>
</dbReference>
<dbReference type="GO" id="GO:0005524">
    <property type="term" value="F:ATP binding"/>
    <property type="evidence" value="ECO:0007669"/>
    <property type="project" value="UniProtKB-UniRule"/>
</dbReference>
<dbReference type="GO" id="GO:0003725">
    <property type="term" value="F:double-stranded RNA binding"/>
    <property type="evidence" value="ECO:0007669"/>
    <property type="project" value="InterPro"/>
</dbReference>
<dbReference type="GO" id="GO:0061710">
    <property type="term" value="F:L-threonylcarbamoyladenylate synthase"/>
    <property type="evidence" value="ECO:0007669"/>
    <property type="project" value="UniProtKB-EC"/>
</dbReference>
<dbReference type="GO" id="GO:0016779">
    <property type="term" value="F:nucleotidyltransferase activity"/>
    <property type="evidence" value="ECO:0000318"/>
    <property type="project" value="GO_Central"/>
</dbReference>
<dbReference type="GO" id="GO:0000049">
    <property type="term" value="F:tRNA binding"/>
    <property type="evidence" value="ECO:0000318"/>
    <property type="project" value="GO_Central"/>
</dbReference>
<dbReference type="GO" id="GO:0006450">
    <property type="term" value="P:regulation of translational fidelity"/>
    <property type="evidence" value="ECO:0000318"/>
    <property type="project" value="GO_Central"/>
</dbReference>
<dbReference type="GO" id="GO:0002949">
    <property type="term" value="P:tRNA threonylcarbamoyladenosine modification"/>
    <property type="evidence" value="ECO:0007669"/>
    <property type="project" value="UniProtKB-UniRule"/>
</dbReference>
<dbReference type="FunFam" id="3.90.870.10:FF:000004">
    <property type="entry name" value="Threonylcarbamoyl-AMP synthase"/>
    <property type="match status" value="1"/>
</dbReference>
<dbReference type="Gene3D" id="3.90.870.10">
    <property type="entry name" value="DHBP synthase"/>
    <property type="match status" value="1"/>
</dbReference>
<dbReference type="HAMAP" id="MF_01852">
    <property type="entry name" value="TsaC"/>
    <property type="match status" value="1"/>
</dbReference>
<dbReference type="InterPro" id="IPR017945">
    <property type="entry name" value="DHBP_synth_RibB-like_a/b_dom"/>
</dbReference>
<dbReference type="InterPro" id="IPR006070">
    <property type="entry name" value="Sua5-like_dom"/>
</dbReference>
<dbReference type="InterPro" id="IPR023535">
    <property type="entry name" value="TC-AMP_synthase"/>
</dbReference>
<dbReference type="InterPro" id="IPR050156">
    <property type="entry name" value="TC-AMP_synthase_SUA5"/>
</dbReference>
<dbReference type="NCBIfam" id="NF007919">
    <property type="entry name" value="PRK10634.1"/>
    <property type="match status" value="1"/>
</dbReference>
<dbReference type="PANTHER" id="PTHR17490">
    <property type="entry name" value="SUA5"/>
    <property type="match status" value="1"/>
</dbReference>
<dbReference type="PANTHER" id="PTHR17490:SF18">
    <property type="entry name" value="THREONYLCARBAMOYL-AMP SYNTHASE"/>
    <property type="match status" value="1"/>
</dbReference>
<dbReference type="Pfam" id="PF01300">
    <property type="entry name" value="Sua5_yciO_yrdC"/>
    <property type="match status" value="1"/>
</dbReference>
<dbReference type="SUPFAM" id="SSF55821">
    <property type="entry name" value="YrdC/RibB"/>
    <property type="match status" value="1"/>
</dbReference>
<dbReference type="PROSITE" id="PS51163">
    <property type="entry name" value="YRDC"/>
    <property type="match status" value="1"/>
</dbReference>
<evidence type="ECO:0000255" key="1">
    <source>
        <dbReference type="HAMAP-Rule" id="MF_01852"/>
    </source>
</evidence>
<evidence type="ECO:0000305" key="2"/>
<gene>
    <name evidence="1" type="primary">tsaC</name>
    <name type="synonym">rimN</name>
    <name type="ordered locus">YPO0245.1</name>
    <name type="ordered locus">y4027</name>
    <name type="ordered locus">YP_0244</name>
    <name type="ORF">YPO0245a</name>
</gene>
<name>TSAC_YERPE</name>
<organism>
    <name type="scientific">Yersinia pestis</name>
    <dbReference type="NCBI Taxonomy" id="632"/>
    <lineage>
        <taxon>Bacteria</taxon>
        <taxon>Pseudomonadati</taxon>
        <taxon>Pseudomonadota</taxon>
        <taxon>Gammaproteobacteria</taxon>
        <taxon>Enterobacterales</taxon>
        <taxon>Yersiniaceae</taxon>
        <taxon>Yersinia</taxon>
    </lineage>
</organism>
<keyword id="KW-0067">ATP-binding</keyword>
<keyword id="KW-0963">Cytoplasm</keyword>
<keyword id="KW-0547">Nucleotide-binding</keyword>
<keyword id="KW-0548">Nucleotidyltransferase</keyword>
<keyword id="KW-1185">Reference proteome</keyword>
<keyword id="KW-0808">Transferase</keyword>
<keyword id="KW-0819">tRNA processing</keyword>
<reference key="1">
    <citation type="journal article" date="2001" name="Nature">
        <title>Genome sequence of Yersinia pestis, the causative agent of plague.</title>
        <authorList>
            <person name="Parkhill J."/>
            <person name="Wren B.W."/>
            <person name="Thomson N.R."/>
            <person name="Titball R.W."/>
            <person name="Holden M.T.G."/>
            <person name="Prentice M.B."/>
            <person name="Sebaihia M."/>
            <person name="James K.D."/>
            <person name="Churcher C.M."/>
            <person name="Mungall K.L."/>
            <person name="Baker S."/>
            <person name="Basham D."/>
            <person name="Bentley S.D."/>
            <person name="Brooks K."/>
            <person name="Cerdeno-Tarraga A.-M."/>
            <person name="Chillingworth T."/>
            <person name="Cronin A."/>
            <person name="Davies R.M."/>
            <person name="Davis P."/>
            <person name="Dougan G."/>
            <person name="Feltwell T."/>
            <person name="Hamlin N."/>
            <person name="Holroyd S."/>
            <person name="Jagels K."/>
            <person name="Karlyshev A.V."/>
            <person name="Leather S."/>
            <person name="Moule S."/>
            <person name="Oyston P.C.F."/>
            <person name="Quail M.A."/>
            <person name="Rutherford K.M."/>
            <person name="Simmonds M."/>
            <person name="Skelton J."/>
            <person name="Stevens K."/>
            <person name="Whitehead S."/>
            <person name="Barrell B.G."/>
        </authorList>
    </citation>
    <scope>NUCLEOTIDE SEQUENCE [LARGE SCALE GENOMIC DNA]</scope>
    <source>
        <strain>CO-92 / Biovar Orientalis</strain>
    </source>
</reference>
<reference key="2">
    <citation type="journal article" date="2002" name="J. Bacteriol.">
        <title>Genome sequence of Yersinia pestis KIM.</title>
        <authorList>
            <person name="Deng W."/>
            <person name="Burland V."/>
            <person name="Plunkett G. III"/>
            <person name="Boutin A."/>
            <person name="Mayhew G.F."/>
            <person name="Liss P."/>
            <person name="Perna N.T."/>
            <person name="Rose D.J."/>
            <person name="Mau B."/>
            <person name="Zhou S."/>
            <person name="Schwartz D.C."/>
            <person name="Fetherston J.D."/>
            <person name="Lindler L.E."/>
            <person name="Brubaker R.R."/>
            <person name="Plano G.V."/>
            <person name="Straley S.C."/>
            <person name="McDonough K.A."/>
            <person name="Nilles M.L."/>
            <person name="Matson J.S."/>
            <person name="Blattner F.R."/>
            <person name="Perry R.D."/>
        </authorList>
    </citation>
    <scope>NUCLEOTIDE SEQUENCE [LARGE SCALE GENOMIC DNA]</scope>
    <source>
        <strain>KIM10+ / Biovar Mediaevalis</strain>
    </source>
</reference>
<reference key="3">
    <citation type="journal article" date="2004" name="DNA Res.">
        <title>Complete genome sequence of Yersinia pestis strain 91001, an isolate avirulent to humans.</title>
        <authorList>
            <person name="Song Y."/>
            <person name="Tong Z."/>
            <person name="Wang J."/>
            <person name="Wang L."/>
            <person name="Guo Z."/>
            <person name="Han Y."/>
            <person name="Zhang J."/>
            <person name="Pei D."/>
            <person name="Zhou D."/>
            <person name="Qin H."/>
            <person name="Pang X."/>
            <person name="Han Y."/>
            <person name="Zhai J."/>
            <person name="Li M."/>
            <person name="Cui B."/>
            <person name="Qi Z."/>
            <person name="Jin L."/>
            <person name="Dai R."/>
            <person name="Chen F."/>
            <person name="Li S."/>
            <person name="Ye C."/>
            <person name="Du Z."/>
            <person name="Lin W."/>
            <person name="Wang J."/>
            <person name="Yu J."/>
            <person name="Yang H."/>
            <person name="Wang J."/>
            <person name="Huang P."/>
            <person name="Yang R."/>
        </authorList>
    </citation>
    <scope>NUCLEOTIDE SEQUENCE [LARGE SCALE GENOMIC DNA]</scope>
    <source>
        <strain>91001 / Biovar Mediaevalis</strain>
    </source>
</reference>
<comment type="function">
    <text evidence="1">Required for the formation of a threonylcarbamoyl group on adenosine at position 37 (t(6)A37) in tRNAs that read codons beginning with adenine. Catalyzes the conversion of L-threonine, HCO(3)(-)/CO(2) and ATP to give threonylcarbamoyl-AMP (TC-AMP) as the acyladenylate intermediate, with the release of diphosphate.</text>
</comment>
<comment type="catalytic activity">
    <reaction evidence="1">
        <text>L-threonine + hydrogencarbonate + ATP = L-threonylcarbamoyladenylate + diphosphate + H2O</text>
        <dbReference type="Rhea" id="RHEA:36407"/>
        <dbReference type="ChEBI" id="CHEBI:15377"/>
        <dbReference type="ChEBI" id="CHEBI:17544"/>
        <dbReference type="ChEBI" id="CHEBI:30616"/>
        <dbReference type="ChEBI" id="CHEBI:33019"/>
        <dbReference type="ChEBI" id="CHEBI:57926"/>
        <dbReference type="ChEBI" id="CHEBI:73682"/>
        <dbReference type="EC" id="2.7.7.87"/>
    </reaction>
</comment>
<comment type="subcellular location">
    <subcellularLocation>
        <location evidence="1">Cytoplasm</location>
    </subcellularLocation>
</comment>
<comment type="similarity">
    <text evidence="1">Belongs to the SUA5 family. TsaC subfamily.</text>
</comment>
<comment type="sequence caution" evidence="2">
    <conflict type="erroneous initiation">
        <sequence resource="EMBL-CDS" id="AAM87571"/>
    </conflict>
</comment>
<accession>Q74XX5</accession>
<accession>Q8CZI6</accession>
<sequence length="190" mass="21153">MNQQENNFVLADIVRALRQEEVIAYPTEAVFGLGCDPDSEKAVNTLLALKQRPWQKGLILVAANYAQLEPYINDSMLNEIQRETLFSTWPGPITWVIPARVETPQWLTGCFDSLAVRVSNHPLVQQLCAEYGKPLVSTSANLSGHEPCRTEEEVRIQFGPSLPVLSGHVGGRLNPSEIRDALTGKRFRQG</sequence>